<comment type="function">
    <text evidence="1">Catalyzes the transfer of the enolpyruvyl moiety of phosphoenolpyruvate (PEP) to the 5-hydroxyl of shikimate-3-phosphate (S3P) to produce enolpyruvyl shikimate-3-phosphate and inorganic phosphate.</text>
</comment>
<comment type="catalytic activity">
    <reaction evidence="1">
        <text>3-phosphoshikimate + phosphoenolpyruvate = 5-O-(1-carboxyvinyl)-3-phosphoshikimate + phosphate</text>
        <dbReference type="Rhea" id="RHEA:21256"/>
        <dbReference type="ChEBI" id="CHEBI:43474"/>
        <dbReference type="ChEBI" id="CHEBI:57701"/>
        <dbReference type="ChEBI" id="CHEBI:58702"/>
        <dbReference type="ChEBI" id="CHEBI:145989"/>
        <dbReference type="EC" id="2.5.1.19"/>
    </reaction>
    <physiologicalReaction direction="left-to-right" evidence="1">
        <dbReference type="Rhea" id="RHEA:21257"/>
    </physiologicalReaction>
</comment>
<comment type="pathway">
    <text evidence="1">Metabolic intermediate biosynthesis; chorismate biosynthesis; chorismate from D-erythrose 4-phosphate and phosphoenolpyruvate: step 6/7.</text>
</comment>
<comment type="subunit">
    <text evidence="1">Monomer.</text>
</comment>
<comment type="subcellular location">
    <subcellularLocation>
        <location evidence="1">Cytoplasm</location>
    </subcellularLocation>
</comment>
<comment type="similarity">
    <text evidence="1">Belongs to the EPSP synthase family.</text>
</comment>
<proteinExistence type="inferred from homology"/>
<accession>B0K928</accession>
<name>AROA_THEP3</name>
<gene>
    <name evidence="1" type="primary">aroA</name>
    <name type="ordered locus">Teth39_0986</name>
</gene>
<organism>
    <name type="scientific">Thermoanaerobacter pseudethanolicus (strain ATCC 33223 / 39E)</name>
    <name type="common">Clostridium thermohydrosulfuricum</name>
    <dbReference type="NCBI Taxonomy" id="340099"/>
    <lineage>
        <taxon>Bacteria</taxon>
        <taxon>Bacillati</taxon>
        <taxon>Bacillota</taxon>
        <taxon>Clostridia</taxon>
        <taxon>Thermoanaerobacterales</taxon>
        <taxon>Thermoanaerobacteraceae</taxon>
        <taxon>Thermoanaerobacter</taxon>
    </lineage>
</organism>
<sequence length="423" mass="46151">MDIEVKKKRFLKGVISVPGDKSISHRAVMIGSIAEGITEIENFLLGEDCISTINCMKNLGVDIELKGTNVKVQGKGLYLNKSEKILDVGNSGTTIRLLMGILAGQKFETTLTGDDSIKRRPMGRVITPLSMMGAKIEAREGNFAPLTVFGNKLKGIYYKMPIASAQVKSSIMLASLYADDKTTIEEPYPSRNHTELMFSSFGAKVEVNGTKITCYPGYKLQGQKVIVPGDISSAAYFIVAATLVPNSEVTIKNVNVNPTRTGIIDVIKEMGGDIVLTNERTINNEKVADITVKTSRLKGIEIGGSLIPRLIDEIPVIAVAAVFAEGKTVIKDAEELKVKESNRINTITSELKKMGAKIFETEDGMIIEGTGFLKGNTVESYNDHRIAMSLWVAGLMAEGETKIKNAECVNISYPDFYKTFDML</sequence>
<evidence type="ECO:0000255" key="1">
    <source>
        <dbReference type="HAMAP-Rule" id="MF_00210"/>
    </source>
</evidence>
<keyword id="KW-0028">Amino-acid biosynthesis</keyword>
<keyword id="KW-0057">Aromatic amino acid biosynthesis</keyword>
<keyword id="KW-0963">Cytoplasm</keyword>
<keyword id="KW-1185">Reference proteome</keyword>
<keyword id="KW-0808">Transferase</keyword>
<dbReference type="EC" id="2.5.1.19" evidence="1"/>
<dbReference type="EMBL" id="CP000924">
    <property type="protein sequence ID" value="ABY94641.1"/>
    <property type="molecule type" value="Genomic_DNA"/>
</dbReference>
<dbReference type="RefSeq" id="WP_003868616.1">
    <property type="nucleotide sequence ID" value="NC_010321.1"/>
</dbReference>
<dbReference type="SMR" id="B0K928"/>
<dbReference type="STRING" id="340099.Teth39_0986"/>
<dbReference type="KEGG" id="tpd:Teth39_0986"/>
<dbReference type="eggNOG" id="COG0128">
    <property type="taxonomic scope" value="Bacteria"/>
</dbReference>
<dbReference type="HOGENOM" id="CLU_024321_0_1_9"/>
<dbReference type="UniPathway" id="UPA00053">
    <property type="reaction ID" value="UER00089"/>
</dbReference>
<dbReference type="Proteomes" id="UP000002156">
    <property type="component" value="Chromosome"/>
</dbReference>
<dbReference type="GO" id="GO:0005737">
    <property type="term" value="C:cytoplasm"/>
    <property type="evidence" value="ECO:0007669"/>
    <property type="project" value="UniProtKB-SubCell"/>
</dbReference>
<dbReference type="GO" id="GO:0003866">
    <property type="term" value="F:3-phosphoshikimate 1-carboxyvinyltransferase activity"/>
    <property type="evidence" value="ECO:0007669"/>
    <property type="project" value="UniProtKB-UniRule"/>
</dbReference>
<dbReference type="GO" id="GO:0008652">
    <property type="term" value="P:amino acid biosynthetic process"/>
    <property type="evidence" value="ECO:0007669"/>
    <property type="project" value="UniProtKB-KW"/>
</dbReference>
<dbReference type="GO" id="GO:0009073">
    <property type="term" value="P:aromatic amino acid family biosynthetic process"/>
    <property type="evidence" value="ECO:0007669"/>
    <property type="project" value="UniProtKB-KW"/>
</dbReference>
<dbReference type="GO" id="GO:0009423">
    <property type="term" value="P:chorismate biosynthetic process"/>
    <property type="evidence" value="ECO:0007669"/>
    <property type="project" value="UniProtKB-UniRule"/>
</dbReference>
<dbReference type="CDD" id="cd01556">
    <property type="entry name" value="EPSP_synthase"/>
    <property type="match status" value="1"/>
</dbReference>
<dbReference type="FunFam" id="3.65.10.10:FF:000005">
    <property type="entry name" value="3-phosphoshikimate 1-carboxyvinyltransferase"/>
    <property type="match status" value="1"/>
</dbReference>
<dbReference type="FunFam" id="3.65.10.10:FF:000006">
    <property type="entry name" value="3-phosphoshikimate 1-carboxyvinyltransferase"/>
    <property type="match status" value="1"/>
</dbReference>
<dbReference type="Gene3D" id="3.65.10.10">
    <property type="entry name" value="Enolpyruvate transferase domain"/>
    <property type="match status" value="2"/>
</dbReference>
<dbReference type="HAMAP" id="MF_00210">
    <property type="entry name" value="EPSP_synth"/>
    <property type="match status" value="1"/>
</dbReference>
<dbReference type="InterPro" id="IPR001986">
    <property type="entry name" value="Enolpyruvate_Tfrase_dom"/>
</dbReference>
<dbReference type="InterPro" id="IPR036968">
    <property type="entry name" value="Enolpyruvate_Tfrase_sf"/>
</dbReference>
<dbReference type="InterPro" id="IPR006264">
    <property type="entry name" value="EPSP_synthase"/>
</dbReference>
<dbReference type="InterPro" id="IPR023193">
    <property type="entry name" value="EPSP_synthase_CS"/>
</dbReference>
<dbReference type="InterPro" id="IPR013792">
    <property type="entry name" value="RNA3'P_cycl/enolpyr_Trfase_a/b"/>
</dbReference>
<dbReference type="NCBIfam" id="TIGR01356">
    <property type="entry name" value="aroA"/>
    <property type="match status" value="1"/>
</dbReference>
<dbReference type="PANTHER" id="PTHR21090">
    <property type="entry name" value="AROM/DEHYDROQUINATE SYNTHASE"/>
    <property type="match status" value="1"/>
</dbReference>
<dbReference type="PANTHER" id="PTHR21090:SF5">
    <property type="entry name" value="PENTAFUNCTIONAL AROM POLYPEPTIDE"/>
    <property type="match status" value="1"/>
</dbReference>
<dbReference type="Pfam" id="PF00275">
    <property type="entry name" value="EPSP_synthase"/>
    <property type="match status" value="1"/>
</dbReference>
<dbReference type="PIRSF" id="PIRSF000505">
    <property type="entry name" value="EPSPS"/>
    <property type="match status" value="1"/>
</dbReference>
<dbReference type="SUPFAM" id="SSF55205">
    <property type="entry name" value="EPT/RTPC-like"/>
    <property type="match status" value="1"/>
</dbReference>
<dbReference type="PROSITE" id="PS00104">
    <property type="entry name" value="EPSP_SYNTHASE_1"/>
    <property type="match status" value="1"/>
</dbReference>
<dbReference type="PROSITE" id="PS00885">
    <property type="entry name" value="EPSP_SYNTHASE_2"/>
    <property type="match status" value="1"/>
</dbReference>
<feature type="chain" id="PRO_1000099759" description="3-phosphoshikimate 1-carboxyvinyltransferase">
    <location>
        <begin position="1"/>
        <end position="423"/>
    </location>
</feature>
<feature type="active site" description="Proton acceptor" evidence="1">
    <location>
        <position position="312"/>
    </location>
</feature>
<feature type="binding site" evidence="1">
    <location>
        <position position="21"/>
    </location>
    <ligand>
        <name>3-phosphoshikimate</name>
        <dbReference type="ChEBI" id="CHEBI:145989"/>
    </ligand>
</feature>
<feature type="binding site" evidence="1">
    <location>
        <position position="21"/>
    </location>
    <ligand>
        <name>phosphoenolpyruvate</name>
        <dbReference type="ChEBI" id="CHEBI:58702"/>
    </ligand>
</feature>
<feature type="binding site" evidence="1">
    <location>
        <position position="22"/>
    </location>
    <ligand>
        <name>3-phosphoshikimate</name>
        <dbReference type="ChEBI" id="CHEBI:145989"/>
    </ligand>
</feature>
<feature type="binding site" evidence="1">
    <location>
        <position position="26"/>
    </location>
    <ligand>
        <name>3-phosphoshikimate</name>
        <dbReference type="ChEBI" id="CHEBI:145989"/>
    </ligand>
</feature>
<feature type="binding site" evidence="1">
    <location>
        <position position="92"/>
    </location>
    <ligand>
        <name>phosphoenolpyruvate</name>
        <dbReference type="ChEBI" id="CHEBI:58702"/>
    </ligand>
</feature>
<feature type="binding site" evidence="1">
    <location>
        <position position="120"/>
    </location>
    <ligand>
        <name>phosphoenolpyruvate</name>
        <dbReference type="ChEBI" id="CHEBI:58702"/>
    </ligand>
</feature>
<feature type="binding site" evidence="1">
    <location>
        <position position="164"/>
    </location>
    <ligand>
        <name>3-phosphoshikimate</name>
        <dbReference type="ChEBI" id="CHEBI:145989"/>
    </ligand>
</feature>
<feature type="binding site" evidence="1">
    <location>
        <position position="166"/>
    </location>
    <ligand>
        <name>3-phosphoshikimate</name>
        <dbReference type="ChEBI" id="CHEBI:145989"/>
    </ligand>
</feature>
<feature type="binding site" evidence="1">
    <location>
        <position position="166"/>
    </location>
    <ligand>
        <name>phosphoenolpyruvate</name>
        <dbReference type="ChEBI" id="CHEBI:58702"/>
    </ligand>
</feature>
<feature type="binding site" evidence="1">
    <location>
        <position position="312"/>
    </location>
    <ligand>
        <name>3-phosphoshikimate</name>
        <dbReference type="ChEBI" id="CHEBI:145989"/>
    </ligand>
</feature>
<feature type="binding site" evidence="1">
    <location>
        <position position="339"/>
    </location>
    <ligand>
        <name>3-phosphoshikimate</name>
        <dbReference type="ChEBI" id="CHEBI:145989"/>
    </ligand>
</feature>
<feature type="binding site" evidence="1">
    <location>
        <position position="343"/>
    </location>
    <ligand>
        <name>phosphoenolpyruvate</name>
        <dbReference type="ChEBI" id="CHEBI:58702"/>
    </ligand>
</feature>
<feature type="binding site" evidence="1">
    <location>
        <position position="385"/>
    </location>
    <ligand>
        <name>phosphoenolpyruvate</name>
        <dbReference type="ChEBI" id="CHEBI:58702"/>
    </ligand>
</feature>
<protein>
    <recommendedName>
        <fullName evidence="1">3-phosphoshikimate 1-carboxyvinyltransferase</fullName>
        <ecNumber evidence="1">2.5.1.19</ecNumber>
    </recommendedName>
    <alternativeName>
        <fullName evidence="1">5-enolpyruvylshikimate-3-phosphate synthase</fullName>
        <shortName evidence="1">EPSP synthase</shortName>
        <shortName evidence="1">EPSPS</shortName>
    </alternativeName>
</protein>
<reference key="1">
    <citation type="submission" date="2008-01" db="EMBL/GenBank/DDBJ databases">
        <title>Complete sequence of Thermoanaerobacter pseudethanolicus 39E.</title>
        <authorList>
            <person name="Copeland A."/>
            <person name="Lucas S."/>
            <person name="Lapidus A."/>
            <person name="Barry K."/>
            <person name="Glavina del Rio T."/>
            <person name="Dalin E."/>
            <person name="Tice H."/>
            <person name="Pitluck S."/>
            <person name="Bruce D."/>
            <person name="Goodwin L."/>
            <person name="Saunders E."/>
            <person name="Brettin T."/>
            <person name="Detter J.C."/>
            <person name="Han C."/>
            <person name="Schmutz J."/>
            <person name="Larimer F."/>
            <person name="Land M."/>
            <person name="Hauser L."/>
            <person name="Kyrpides N."/>
            <person name="Lykidis A."/>
            <person name="Hemme C."/>
            <person name="Fields M.W."/>
            <person name="He Z."/>
            <person name="Zhou J."/>
            <person name="Richardson P."/>
        </authorList>
    </citation>
    <scope>NUCLEOTIDE SEQUENCE [LARGE SCALE GENOMIC DNA]</scope>
    <source>
        <strain>ATCC 33223 / DSM 2355 / 39E</strain>
    </source>
</reference>